<accession>A0LDS6</accession>
<keyword id="KW-0004">4Fe-4S</keyword>
<keyword id="KW-0997">Cell inner membrane</keyword>
<keyword id="KW-1003">Cell membrane</keyword>
<keyword id="KW-0408">Iron</keyword>
<keyword id="KW-0411">Iron-sulfur</keyword>
<keyword id="KW-0472">Membrane</keyword>
<keyword id="KW-0479">Metal-binding</keyword>
<keyword id="KW-0520">NAD</keyword>
<keyword id="KW-0874">Quinone</keyword>
<keyword id="KW-1185">Reference proteome</keyword>
<keyword id="KW-1278">Translocase</keyword>
<keyword id="KW-0813">Transport</keyword>
<keyword id="KW-0830">Ubiquinone</keyword>
<organism>
    <name type="scientific">Magnetococcus marinus (strain ATCC BAA-1437 / JCM 17883 / MC-1)</name>
    <dbReference type="NCBI Taxonomy" id="156889"/>
    <lineage>
        <taxon>Bacteria</taxon>
        <taxon>Pseudomonadati</taxon>
        <taxon>Pseudomonadota</taxon>
        <taxon>Alphaproteobacteria</taxon>
        <taxon>Magnetococcales</taxon>
        <taxon>Magnetococcaceae</taxon>
        <taxon>Magnetococcus</taxon>
    </lineage>
</organism>
<feature type="chain" id="PRO_0000376265" description="NADH-quinone oxidoreductase subunit B">
    <location>
        <begin position="1"/>
        <end position="167"/>
    </location>
</feature>
<feature type="binding site" evidence="1">
    <location>
        <position position="40"/>
    </location>
    <ligand>
        <name>[4Fe-4S] cluster</name>
        <dbReference type="ChEBI" id="CHEBI:49883"/>
    </ligand>
</feature>
<feature type="binding site" evidence="1">
    <location>
        <position position="41"/>
    </location>
    <ligand>
        <name>[4Fe-4S] cluster</name>
        <dbReference type="ChEBI" id="CHEBI:49883"/>
    </ligand>
</feature>
<feature type="binding site" evidence="1">
    <location>
        <position position="105"/>
    </location>
    <ligand>
        <name>[4Fe-4S] cluster</name>
        <dbReference type="ChEBI" id="CHEBI:49883"/>
    </ligand>
</feature>
<feature type="binding site" evidence="1">
    <location>
        <position position="135"/>
    </location>
    <ligand>
        <name>[4Fe-4S] cluster</name>
        <dbReference type="ChEBI" id="CHEBI:49883"/>
    </ligand>
</feature>
<name>NUOB_MAGMM</name>
<gene>
    <name evidence="1" type="primary">nuoB</name>
    <name type="ordered locus">Mmc1_3634</name>
</gene>
<dbReference type="EC" id="7.1.1.-" evidence="1"/>
<dbReference type="EMBL" id="CP000471">
    <property type="protein sequence ID" value="ABK46119.1"/>
    <property type="molecule type" value="Genomic_DNA"/>
</dbReference>
<dbReference type="RefSeq" id="WP_011715173.1">
    <property type="nucleotide sequence ID" value="NC_008576.1"/>
</dbReference>
<dbReference type="SMR" id="A0LDS6"/>
<dbReference type="STRING" id="156889.Mmc1_3634"/>
<dbReference type="KEGG" id="mgm:Mmc1_3634"/>
<dbReference type="eggNOG" id="COG0377">
    <property type="taxonomic scope" value="Bacteria"/>
</dbReference>
<dbReference type="HOGENOM" id="CLU_055737_7_0_5"/>
<dbReference type="OrthoDB" id="9786737at2"/>
<dbReference type="Proteomes" id="UP000002586">
    <property type="component" value="Chromosome"/>
</dbReference>
<dbReference type="GO" id="GO:0005886">
    <property type="term" value="C:plasma membrane"/>
    <property type="evidence" value="ECO:0007669"/>
    <property type="project" value="UniProtKB-SubCell"/>
</dbReference>
<dbReference type="GO" id="GO:0045271">
    <property type="term" value="C:respiratory chain complex I"/>
    <property type="evidence" value="ECO:0007669"/>
    <property type="project" value="TreeGrafter"/>
</dbReference>
<dbReference type="GO" id="GO:0051539">
    <property type="term" value="F:4 iron, 4 sulfur cluster binding"/>
    <property type="evidence" value="ECO:0007669"/>
    <property type="project" value="UniProtKB-KW"/>
</dbReference>
<dbReference type="GO" id="GO:0005506">
    <property type="term" value="F:iron ion binding"/>
    <property type="evidence" value="ECO:0007669"/>
    <property type="project" value="UniProtKB-UniRule"/>
</dbReference>
<dbReference type="GO" id="GO:0008137">
    <property type="term" value="F:NADH dehydrogenase (ubiquinone) activity"/>
    <property type="evidence" value="ECO:0007669"/>
    <property type="project" value="InterPro"/>
</dbReference>
<dbReference type="GO" id="GO:0050136">
    <property type="term" value="F:NADH:ubiquinone reductase (non-electrogenic) activity"/>
    <property type="evidence" value="ECO:0007669"/>
    <property type="project" value="UniProtKB-UniRule"/>
</dbReference>
<dbReference type="GO" id="GO:0048038">
    <property type="term" value="F:quinone binding"/>
    <property type="evidence" value="ECO:0007669"/>
    <property type="project" value="UniProtKB-KW"/>
</dbReference>
<dbReference type="GO" id="GO:0009060">
    <property type="term" value="P:aerobic respiration"/>
    <property type="evidence" value="ECO:0007669"/>
    <property type="project" value="TreeGrafter"/>
</dbReference>
<dbReference type="GO" id="GO:0015990">
    <property type="term" value="P:electron transport coupled proton transport"/>
    <property type="evidence" value="ECO:0007669"/>
    <property type="project" value="TreeGrafter"/>
</dbReference>
<dbReference type="FunFam" id="3.40.50.12280:FF:000001">
    <property type="entry name" value="NADH-quinone oxidoreductase subunit B 2"/>
    <property type="match status" value="1"/>
</dbReference>
<dbReference type="Gene3D" id="3.40.50.12280">
    <property type="match status" value="1"/>
</dbReference>
<dbReference type="HAMAP" id="MF_01356">
    <property type="entry name" value="NDH1_NuoB"/>
    <property type="match status" value="1"/>
</dbReference>
<dbReference type="InterPro" id="IPR006137">
    <property type="entry name" value="NADH_UbQ_OxRdtase-like_20kDa"/>
</dbReference>
<dbReference type="InterPro" id="IPR006138">
    <property type="entry name" value="NADH_UQ_OxRdtase_20Kd_su"/>
</dbReference>
<dbReference type="NCBIfam" id="TIGR01957">
    <property type="entry name" value="nuoB_fam"/>
    <property type="match status" value="1"/>
</dbReference>
<dbReference type="NCBIfam" id="NF005012">
    <property type="entry name" value="PRK06411.1"/>
    <property type="match status" value="1"/>
</dbReference>
<dbReference type="PANTHER" id="PTHR11995">
    <property type="entry name" value="NADH DEHYDROGENASE"/>
    <property type="match status" value="1"/>
</dbReference>
<dbReference type="PANTHER" id="PTHR11995:SF14">
    <property type="entry name" value="NADH DEHYDROGENASE [UBIQUINONE] IRON-SULFUR PROTEIN 7, MITOCHONDRIAL"/>
    <property type="match status" value="1"/>
</dbReference>
<dbReference type="Pfam" id="PF01058">
    <property type="entry name" value="Oxidored_q6"/>
    <property type="match status" value="1"/>
</dbReference>
<dbReference type="SUPFAM" id="SSF56770">
    <property type="entry name" value="HydA/Nqo6-like"/>
    <property type="match status" value="1"/>
</dbReference>
<dbReference type="PROSITE" id="PS01150">
    <property type="entry name" value="COMPLEX1_20K"/>
    <property type="match status" value="1"/>
</dbReference>
<sequence length="167" mass="18736">MIEELHQEVSDRGFLLTSADKLVNWGRSMSMWPMTFGLACCAVEMMNAGASRYDLDRFGVVFRGSPRQSDVIIVAGTLTNKMAPALRKVYDQMPEPRYVISMGSCANGGGYYHYSYSVVRGCDRILPVDVYIPGCPPTAEAVMYGIMQLQKKINREGQVYSGWRKRV</sequence>
<evidence type="ECO:0000255" key="1">
    <source>
        <dbReference type="HAMAP-Rule" id="MF_01356"/>
    </source>
</evidence>
<reference key="1">
    <citation type="journal article" date="2009" name="Appl. Environ. Microbiol.">
        <title>Complete genome sequence of the chemolithoautotrophic marine magnetotactic coccus strain MC-1.</title>
        <authorList>
            <person name="Schubbe S."/>
            <person name="Williams T.J."/>
            <person name="Xie G."/>
            <person name="Kiss H.E."/>
            <person name="Brettin T.S."/>
            <person name="Martinez D."/>
            <person name="Ross C.A."/>
            <person name="Schuler D."/>
            <person name="Cox B.L."/>
            <person name="Nealson K.H."/>
            <person name="Bazylinski D.A."/>
        </authorList>
    </citation>
    <scope>NUCLEOTIDE SEQUENCE [LARGE SCALE GENOMIC DNA]</scope>
    <source>
        <strain>ATCC BAA-1437 / JCM 17883 / MC-1</strain>
    </source>
</reference>
<comment type="function">
    <text evidence="1">NDH-1 shuttles electrons from NADH, via FMN and iron-sulfur (Fe-S) centers, to quinones in the respiratory chain. The immediate electron acceptor for the enzyme in this species is believed to be ubiquinone. Couples the redox reaction to proton translocation (for every two electrons transferred, four hydrogen ions are translocated across the cytoplasmic membrane), and thus conserves the redox energy in a proton gradient.</text>
</comment>
<comment type="catalytic activity">
    <reaction evidence="1">
        <text>a quinone + NADH + 5 H(+)(in) = a quinol + NAD(+) + 4 H(+)(out)</text>
        <dbReference type="Rhea" id="RHEA:57888"/>
        <dbReference type="ChEBI" id="CHEBI:15378"/>
        <dbReference type="ChEBI" id="CHEBI:24646"/>
        <dbReference type="ChEBI" id="CHEBI:57540"/>
        <dbReference type="ChEBI" id="CHEBI:57945"/>
        <dbReference type="ChEBI" id="CHEBI:132124"/>
    </reaction>
</comment>
<comment type="cofactor">
    <cofactor evidence="1">
        <name>[4Fe-4S] cluster</name>
        <dbReference type="ChEBI" id="CHEBI:49883"/>
    </cofactor>
    <text evidence="1">Binds 1 [4Fe-4S] cluster.</text>
</comment>
<comment type="subunit">
    <text evidence="1">NDH-1 is composed of 14 different subunits. Subunits NuoB, C, D, E, F, and G constitute the peripheral sector of the complex.</text>
</comment>
<comment type="subcellular location">
    <subcellularLocation>
        <location evidence="1">Cell inner membrane</location>
        <topology evidence="1">Peripheral membrane protein</topology>
        <orientation evidence="1">Cytoplasmic side</orientation>
    </subcellularLocation>
</comment>
<comment type="similarity">
    <text evidence="1">Belongs to the complex I 20 kDa subunit family.</text>
</comment>
<proteinExistence type="inferred from homology"/>
<protein>
    <recommendedName>
        <fullName evidence="1">NADH-quinone oxidoreductase subunit B</fullName>
        <ecNumber evidence="1">7.1.1.-</ecNumber>
    </recommendedName>
    <alternativeName>
        <fullName evidence="1">NADH dehydrogenase I subunit B</fullName>
    </alternativeName>
    <alternativeName>
        <fullName evidence="1">NDH-1 subunit B</fullName>
    </alternativeName>
</protein>